<name>CA122_HUMAN</name>
<sequence>MEWGPGSDWSRGEAAGVDRGKAGLGLGGRPPPQPPREERAQQLLDAVEQRQRQLLDTIAACEEMLRQLGRRRPEPAGGGNVSAKPGAPPQPAVSARGGFPKDAGDGAAEP</sequence>
<gene>
    <name type="primary">C1orf122</name>
</gene>
<organism>
    <name type="scientific">Homo sapiens</name>
    <name type="common">Human</name>
    <dbReference type="NCBI Taxonomy" id="9606"/>
    <lineage>
        <taxon>Eukaryota</taxon>
        <taxon>Metazoa</taxon>
        <taxon>Chordata</taxon>
        <taxon>Craniata</taxon>
        <taxon>Vertebrata</taxon>
        <taxon>Euteleostomi</taxon>
        <taxon>Mammalia</taxon>
        <taxon>Eutheria</taxon>
        <taxon>Euarchontoglires</taxon>
        <taxon>Primates</taxon>
        <taxon>Haplorrhini</taxon>
        <taxon>Catarrhini</taxon>
        <taxon>Hominidae</taxon>
        <taxon>Homo</taxon>
    </lineage>
</organism>
<proteinExistence type="evidence at protein level"/>
<keyword id="KW-0025">Alternative splicing</keyword>
<keyword id="KW-0175">Coiled coil</keyword>
<keyword id="KW-1267">Proteomics identification</keyword>
<keyword id="KW-1185">Reference proteome</keyword>
<dbReference type="EMBL" id="AK127381">
    <property type="protein sequence ID" value="BAC86950.1"/>
    <property type="status" value="ALT_SEQ"/>
    <property type="molecule type" value="mRNA"/>
</dbReference>
<dbReference type="EMBL" id="AY517499">
    <property type="protein sequence ID" value="AAS76640.1"/>
    <property type="molecule type" value="mRNA"/>
</dbReference>
<dbReference type="EMBL" id="AL929472">
    <property type="status" value="NOT_ANNOTATED_CDS"/>
    <property type="molecule type" value="Genomic_DNA"/>
</dbReference>
<dbReference type="EMBL" id="BC057819">
    <property type="protein sequence ID" value="AAH57819.1"/>
    <property type="status" value="ALT_SEQ"/>
    <property type="molecule type" value="mRNA"/>
</dbReference>
<dbReference type="CCDS" id="CCDS427.2">
    <molecule id="Q6ZSJ8-1"/>
</dbReference>
<dbReference type="CCDS" id="CCDS44112.1">
    <molecule id="Q6ZSJ8-2"/>
</dbReference>
<dbReference type="RefSeq" id="NP_001136198.1">
    <molecule id="Q6ZSJ8-2"/>
    <property type="nucleotide sequence ID" value="NM_001142726.2"/>
</dbReference>
<dbReference type="RefSeq" id="NP_940848.2">
    <molecule id="Q6ZSJ8-1"/>
    <property type="nucleotide sequence ID" value="NM_198446.3"/>
</dbReference>
<dbReference type="SMR" id="Q6ZSJ8"/>
<dbReference type="BioGRID" id="126077">
    <property type="interactions" value="20"/>
</dbReference>
<dbReference type="FunCoup" id="Q6ZSJ8">
    <property type="interactions" value="230"/>
</dbReference>
<dbReference type="IntAct" id="Q6ZSJ8">
    <property type="interactions" value="13"/>
</dbReference>
<dbReference type="STRING" id="9606.ENSP00000362133"/>
<dbReference type="GlyGen" id="Q6ZSJ8">
    <property type="glycosylation" value="1 site, 1 O-linked glycan (1 site)"/>
</dbReference>
<dbReference type="iPTMnet" id="Q6ZSJ8"/>
<dbReference type="PhosphoSitePlus" id="Q6ZSJ8"/>
<dbReference type="BioMuta" id="C1orf122"/>
<dbReference type="jPOST" id="Q6ZSJ8"/>
<dbReference type="MassIVE" id="Q6ZSJ8"/>
<dbReference type="PaxDb" id="9606-ENSP00000362133"/>
<dbReference type="PeptideAtlas" id="Q6ZSJ8"/>
<dbReference type="ProteomicsDB" id="22883"/>
<dbReference type="ProteomicsDB" id="68221">
    <molecule id="Q6ZSJ8-1"/>
</dbReference>
<dbReference type="Pumba" id="Q6ZSJ8"/>
<dbReference type="TopDownProteomics" id="Q6ZSJ8-1">
    <molecule id="Q6ZSJ8-1"/>
</dbReference>
<dbReference type="Antibodypedia" id="54370">
    <property type="antibodies" value="51 antibodies from 11 providers"/>
</dbReference>
<dbReference type="DNASU" id="127687"/>
<dbReference type="Ensembl" id="ENST00000373042.5">
    <molecule id="Q6ZSJ8-1"/>
    <property type="protein sequence ID" value="ENSP00000362133.4"/>
    <property type="gene ID" value="ENSG00000197982.14"/>
</dbReference>
<dbReference type="Ensembl" id="ENST00000373043.1">
    <molecule id="Q6ZSJ8-2"/>
    <property type="protein sequence ID" value="ENSP00000362134.1"/>
    <property type="gene ID" value="ENSG00000197982.14"/>
</dbReference>
<dbReference type="Ensembl" id="ENST00000468084.1">
    <molecule id="Q6ZSJ8-2"/>
    <property type="protein sequence ID" value="ENSP00000434520.1"/>
    <property type="gene ID" value="ENSG00000197982.14"/>
</dbReference>
<dbReference type="GeneID" id="127687"/>
<dbReference type="KEGG" id="hsa:127687"/>
<dbReference type="MANE-Select" id="ENST00000373042.5">
    <property type="protein sequence ID" value="ENSP00000362133.4"/>
    <property type="RefSeq nucleotide sequence ID" value="NM_198446.3"/>
    <property type="RefSeq protein sequence ID" value="NP_940848.2"/>
</dbReference>
<dbReference type="UCSC" id="uc001ccd.3">
    <molecule id="Q6ZSJ8-1"/>
    <property type="organism name" value="human"/>
</dbReference>
<dbReference type="AGR" id="HGNC:24789"/>
<dbReference type="CTD" id="127687"/>
<dbReference type="GeneCards" id="C1orf122"/>
<dbReference type="HGNC" id="HGNC:24789">
    <property type="gene designation" value="C1orf122"/>
</dbReference>
<dbReference type="HPA" id="ENSG00000197982">
    <property type="expression patterns" value="Tissue enhanced (brain)"/>
</dbReference>
<dbReference type="MalaCards" id="C1orf122"/>
<dbReference type="neXtProt" id="NX_Q6ZSJ8"/>
<dbReference type="OpenTargets" id="ENSG00000197982"/>
<dbReference type="PharmGKB" id="PA142672440"/>
<dbReference type="VEuPathDB" id="HostDB:ENSG00000197982"/>
<dbReference type="eggNOG" id="ENOG502TDYG">
    <property type="taxonomic scope" value="Eukaryota"/>
</dbReference>
<dbReference type="GeneTree" id="ENSGT00570000079623"/>
<dbReference type="HOGENOM" id="CLU_3175232_0_0_1"/>
<dbReference type="InParanoid" id="Q6ZSJ8"/>
<dbReference type="OMA" id="DAHNQLP"/>
<dbReference type="OrthoDB" id="9823503at2759"/>
<dbReference type="PAN-GO" id="Q6ZSJ8">
    <property type="GO annotations" value="0 GO annotations based on evolutionary models"/>
</dbReference>
<dbReference type="PathwayCommons" id="Q6ZSJ8"/>
<dbReference type="SignaLink" id="Q6ZSJ8"/>
<dbReference type="BioGRID-ORCS" id="127687">
    <property type="hits" value="9 hits in 1124 CRISPR screens"/>
</dbReference>
<dbReference type="ChiTaRS" id="C1orf122">
    <property type="organism name" value="human"/>
</dbReference>
<dbReference type="GenomeRNAi" id="127687"/>
<dbReference type="Pharos" id="Q6ZSJ8">
    <property type="development level" value="Tdark"/>
</dbReference>
<dbReference type="PRO" id="PR:Q6ZSJ8"/>
<dbReference type="Proteomes" id="UP000005640">
    <property type="component" value="Chromosome 1"/>
</dbReference>
<dbReference type="RNAct" id="Q6ZSJ8">
    <property type="molecule type" value="protein"/>
</dbReference>
<dbReference type="Bgee" id="ENSG00000197982">
    <property type="expression patterns" value="Expressed in C1 segment of cervical spinal cord and 179 other cell types or tissues"/>
</dbReference>
<dbReference type="InterPro" id="IPR031714">
    <property type="entry name" value="DUF4726"/>
</dbReference>
<dbReference type="PANTHER" id="PTHR41401">
    <property type="entry name" value="RGD1559909"/>
    <property type="match status" value="1"/>
</dbReference>
<dbReference type="PANTHER" id="PTHR41401:SF1">
    <property type="entry name" value="RIKEN CDNA 1110065P20 GENE"/>
    <property type="match status" value="1"/>
</dbReference>
<dbReference type="Pfam" id="PF15855">
    <property type="entry name" value="DUF4726"/>
    <property type="match status" value="1"/>
</dbReference>
<feature type="chain" id="PRO_0000254193" description="Uncharacterized protein C1orf122">
    <location>
        <begin position="1"/>
        <end position="110"/>
    </location>
</feature>
<feature type="region of interest" description="Disordered" evidence="2">
    <location>
        <begin position="1"/>
        <end position="42"/>
    </location>
</feature>
<feature type="region of interest" description="Disordered" evidence="2">
    <location>
        <begin position="66"/>
        <end position="110"/>
    </location>
</feature>
<feature type="coiled-coil region" evidence="1">
    <location>
        <begin position="36"/>
        <end position="68"/>
    </location>
</feature>
<feature type="splice variant" id="VSP_046648" description="In isoform 2." evidence="3">
    <location>
        <begin position="1"/>
        <end position="63"/>
    </location>
</feature>
<reference key="1">
    <citation type="journal article" date="2004" name="Nat. Genet.">
        <title>Complete sequencing and characterization of 21,243 full-length human cDNAs.</title>
        <authorList>
            <person name="Ota T."/>
            <person name="Suzuki Y."/>
            <person name="Nishikawa T."/>
            <person name="Otsuki T."/>
            <person name="Sugiyama T."/>
            <person name="Irie R."/>
            <person name="Wakamatsu A."/>
            <person name="Hayashi K."/>
            <person name="Sato H."/>
            <person name="Nagai K."/>
            <person name="Kimura K."/>
            <person name="Makita H."/>
            <person name="Sekine M."/>
            <person name="Obayashi M."/>
            <person name="Nishi T."/>
            <person name="Shibahara T."/>
            <person name="Tanaka T."/>
            <person name="Ishii S."/>
            <person name="Yamamoto J."/>
            <person name="Saito K."/>
            <person name="Kawai Y."/>
            <person name="Isono Y."/>
            <person name="Nakamura Y."/>
            <person name="Nagahari K."/>
            <person name="Murakami K."/>
            <person name="Yasuda T."/>
            <person name="Iwayanagi T."/>
            <person name="Wagatsuma M."/>
            <person name="Shiratori A."/>
            <person name="Sudo H."/>
            <person name="Hosoiri T."/>
            <person name="Kaku Y."/>
            <person name="Kodaira H."/>
            <person name="Kondo H."/>
            <person name="Sugawara M."/>
            <person name="Takahashi M."/>
            <person name="Kanda K."/>
            <person name="Yokoi T."/>
            <person name="Furuya T."/>
            <person name="Kikkawa E."/>
            <person name="Omura Y."/>
            <person name="Abe K."/>
            <person name="Kamihara K."/>
            <person name="Katsuta N."/>
            <person name="Sato K."/>
            <person name="Tanikawa M."/>
            <person name="Yamazaki M."/>
            <person name="Ninomiya K."/>
            <person name="Ishibashi T."/>
            <person name="Yamashita H."/>
            <person name="Murakawa K."/>
            <person name="Fujimori K."/>
            <person name="Tanai H."/>
            <person name="Kimata M."/>
            <person name="Watanabe M."/>
            <person name="Hiraoka S."/>
            <person name="Chiba Y."/>
            <person name="Ishida S."/>
            <person name="Ono Y."/>
            <person name="Takiguchi S."/>
            <person name="Watanabe S."/>
            <person name="Yosida M."/>
            <person name="Hotuta T."/>
            <person name="Kusano J."/>
            <person name="Kanehori K."/>
            <person name="Takahashi-Fujii A."/>
            <person name="Hara H."/>
            <person name="Tanase T.-O."/>
            <person name="Nomura Y."/>
            <person name="Togiya S."/>
            <person name="Komai F."/>
            <person name="Hara R."/>
            <person name="Takeuchi K."/>
            <person name="Arita M."/>
            <person name="Imose N."/>
            <person name="Musashino K."/>
            <person name="Yuuki H."/>
            <person name="Oshima A."/>
            <person name="Sasaki N."/>
            <person name="Aotsuka S."/>
            <person name="Yoshikawa Y."/>
            <person name="Matsunawa H."/>
            <person name="Ichihara T."/>
            <person name="Shiohata N."/>
            <person name="Sano S."/>
            <person name="Moriya S."/>
            <person name="Momiyama H."/>
            <person name="Satoh N."/>
            <person name="Takami S."/>
            <person name="Terashima Y."/>
            <person name="Suzuki O."/>
            <person name="Nakagawa S."/>
            <person name="Senoh A."/>
            <person name="Mizoguchi H."/>
            <person name="Goto Y."/>
            <person name="Shimizu F."/>
            <person name="Wakebe H."/>
            <person name="Hishigaki H."/>
            <person name="Watanabe T."/>
            <person name="Sugiyama A."/>
            <person name="Takemoto M."/>
            <person name="Kawakami B."/>
            <person name="Yamazaki M."/>
            <person name="Watanabe K."/>
            <person name="Kumagai A."/>
            <person name="Itakura S."/>
            <person name="Fukuzumi Y."/>
            <person name="Fujimori Y."/>
            <person name="Komiyama M."/>
            <person name="Tashiro H."/>
            <person name="Tanigami A."/>
            <person name="Fujiwara T."/>
            <person name="Ono T."/>
            <person name="Yamada K."/>
            <person name="Fujii Y."/>
            <person name="Ozaki K."/>
            <person name="Hirao M."/>
            <person name="Ohmori Y."/>
            <person name="Kawabata A."/>
            <person name="Hikiji T."/>
            <person name="Kobatake N."/>
            <person name="Inagaki H."/>
            <person name="Ikema Y."/>
            <person name="Okamoto S."/>
            <person name="Okitani R."/>
            <person name="Kawakami T."/>
            <person name="Noguchi S."/>
            <person name="Itoh T."/>
            <person name="Shigeta K."/>
            <person name="Senba T."/>
            <person name="Matsumura K."/>
            <person name="Nakajima Y."/>
            <person name="Mizuno T."/>
            <person name="Morinaga M."/>
            <person name="Sasaki M."/>
            <person name="Togashi T."/>
            <person name="Oyama M."/>
            <person name="Hata H."/>
            <person name="Watanabe M."/>
            <person name="Komatsu T."/>
            <person name="Mizushima-Sugano J."/>
            <person name="Satoh T."/>
            <person name="Shirai Y."/>
            <person name="Takahashi Y."/>
            <person name="Nakagawa K."/>
            <person name="Okumura K."/>
            <person name="Nagase T."/>
            <person name="Nomura N."/>
            <person name="Kikuchi H."/>
            <person name="Masuho Y."/>
            <person name="Yamashita R."/>
            <person name="Nakai K."/>
            <person name="Yada T."/>
            <person name="Nakamura Y."/>
            <person name="Ohara O."/>
            <person name="Isogai T."/>
            <person name="Sugano S."/>
        </authorList>
    </citation>
    <scope>NUCLEOTIDE SEQUENCE [LARGE SCALE MRNA] (ISOFORM 1)</scope>
    <source>
        <tissue>Subthalamic nucleus</tissue>
    </source>
</reference>
<reference key="2">
    <citation type="submission" date="2004-01" db="EMBL/GenBank/DDBJ databases">
        <authorList>
            <person name="Chen S."/>
            <person name="Guo J.H."/>
            <person name="Yu L."/>
        </authorList>
    </citation>
    <scope>NUCLEOTIDE SEQUENCE [LARGE SCALE MRNA] (ISOFORM 1)</scope>
</reference>
<reference key="3">
    <citation type="journal article" date="2006" name="Nature">
        <title>The DNA sequence and biological annotation of human chromosome 1.</title>
        <authorList>
            <person name="Gregory S.G."/>
            <person name="Barlow K.F."/>
            <person name="McLay K.E."/>
            <person name="Kaul R."/>
            <person name="Swarbreck D."/>
            <person name="Dunham A."/>
            <person name="Scott C.E."/>
            <person name="Howe K.L."/>
            <person name="Woodfine K."/>
            <person name="Spencer C.C.A."/>
            <person name="Jones M.C."/>
            <person name="Gillson C."/>
            <person name="Searle S."/>
            <person name="Zhou Y."/>
            <person name="Kokocinski F."/>
            <person name="McDonald L."/>
            <person name="Evans R."/>
            <person name="Phillips K."/>
            <person name="Atkinson A."/>
            <person name="Cooper R."/>
            <person name="Jones C."/>
            <person name="Hall R.E."/>
            <person name="Andrews T.D."/>
            <person name="Lloyd C."/>
            <person name="Ainscough R."/>
            <person name="Almeida J.P."/>
            <person name="Ambrose K.D."/>
            <person name="Anderson F."/>
            <person name="Andrew R.W."/>
            <person name="Ashwell R.I.S."/>
            <person name="Aubin K."/>
            <person name="Babbage A.K."/>
            <person name="Bagguley C.L."/>
            <person name="Bailey J."/>
            <person name="Beasley H."/>
            <person name="Bethel G."/>
            <person name="Bird C.P."/>
            <person name="Bray-Allen S."/>
            <person name="Brown J.Y."/>
            <person name="Brown A.J."/>
            <person name="Buckley D."/>
            <person name="Burton J."/>
            <person name="Bye J."/>
            <person name="Carder C."/>
            <person name="Chapman J.C."/>
            <person name="Clark S.Y."/>
            <person name="Clarke G."/>
            <person name="Clee C."/>
            <person name="Cobley V."/>
            <person name="Collier R.E."/>
            <person name="Corby N."/>
            <person name="Coville G.J."/>
            <person name="Davies J."/>
            <person name="Deadman R."/>
            <person name="Dunn M."/>
            <person name="Earthrowl M."/>
            <person name="Ellington A.G."/>
            <person name="Errington H."/>
            <person name="Frankish A."/>
            <person name="Frankland J."/>
            <person name="French L."/>
            <person name="Garner P."/>
            <person name="Garnett J."/>
            <person name="Gay L."/>
            <person name="Ghori M.R.J."/>
            <person name="Gibson R."/>
            <person name="Gilby L.M."/>
            <person name="Gillett W."/>
            <person name="Glithero R.J."/>
            <person name="Grafham D.V."/>
            <person name="Griffiths C."/>
            <person name="Griffiths-Jones S."/>
            <person name="Grocock R."/>
            <person name="Hammond S."/>
            <person name="Harrison E.S.I."/>
            <person name="Hart E."/>
            <person name="Haugen E."/>
            <person name="Heath P.D."/>
            <person name="Holmes S."/>
            <person name="Holt K."/>
            <person name="Howden P.J."/>
            <person name="Hunt A.R."/>
            <person name="Hunt S.E."/>
            <person name="Hunter G."/>
            <person name="Isherwood J."/>
            <person name="James R."/>
            <person name="Johnson C."/>
            <person name="Johnson D."/>
            <person name="Joy A."/>
            <person name="Kay M."/>
            <person name="Kershaw J.K."/>
            <person name="Kibukawa M."/>
            <person name="Kimberley A.M."/>
            <person name="King A."/>
            <person name="Knights A.J."/>
            <person name="Lad H."/>
            <person name="Laird G."/>
            <person name="Lawlor S."/>
            <person name="Leongamornlert D.A."/>
            <person name="Lloyd D.M."/>
            <person name="Loveland J."/>
            <person name="Lovell J."/>
            <person name="Lush M.J."/>
            <person name="Lyne R."/>
            <person name="Martin S."/>
            <person name="Mashreghi-Mohammadi M."/>
            <person name="Matthews L."/>
            <person name="Matthews N.S.W."/>
            <person name="McLaren S."/>
            <person name="Milne S."/>
            <person name="Mistry S."/>
            <person name="Moore M.J.F."/>
            <person name="Nickerson T."/>
            <person name="O'Dell C.N."/>
            <person name="Oliver K."/>
            <person name="Palmeiri A."/>
            <person name="Palmer S.A."/>
            <person name="Parker A."/>
            <person name="Patel D."/>
            <person name="Pearce A.V."/>
            <person name="Peck A.I."/>
            <person name="Pelan S."/>
            <person name="Phelps K."/>
            <person name="Phillimore B.J."/>
            <person name="Plumb R."/>
            <person name="Rajan J."/>
            <person name="Raymond C."/>
            <person name="Rouse G."/>
            <person name="Saenphimmachak C."/>
            <person name="Sehra H.K."/>
            <person name="Sheridan E."/>
            <person name="Shownkeen R."/>
            <person name="Sims S."/>
            <person name="Skuce C.D."/>
            <person name="Smith M."/>
            <person name="Steward C."/>
            <person name="Subramanian S."/>
            <person name="Sycamore N."/>
            <person name="Tracey A."/>
            <person name="Tromans A."/>
            <person name="Van Helmond Z."/>
            <person name="Wall M."/>
            <person name="Wallis J.M."/>
            <person name="White S."/>
            <person name="Whitehead S.L."/>
            <person name="Wilkinson J.E."/>
            <person name="Willey D.L."/>
            <person name="Williams H."/>
            <person name="Wilming L."/>
            <person name="Wray P.W."/>
            <person name="Wu Z."/>
            <person name="Coulson A."/>
            <person name="Vaudin M."/>
            <person name="Sulston J.E."/>
            <person name="Durbin R.M."/>
            <person name="Hubbard T."/>
            <person name="Wooster R."/>
            <person name="Dunham I."/>
            <person name="Carter N.P."/>
            <person name="McVean G."/>
            <person name="Ross M.T."/>
            <person name="Harrow J."/>
            <person name="Olson M.V."/>
            <person name="Beck S."/>
            <person name="Rogers J."/>
            <person name="Bentley D.R."/>
        </authorList>
    </citation>
    <scope>NUCLEOTIDE SEQUENCE [LARGE SCALE GENOMIC DNA]</scope>
</reference>
<reference key="4">
    <citation type="journal article" date="2004" name="Genome Res.">
        <title>The status, quality, and expansion of the NIH full-length cDNA project: the Mammalian Gene Collection (MGC).</title>
        <authorList>
            <consortium name="The MGC Project Team"/>
        </authorList>
    </citation>
    <scope>NUCLEOTIDE SEQUENCE [LARGE SCALE MRNA] (ISOFORM 1)</scope>
    <source>
        <tissue>Brain</tissue>
    </source>
</reference>
<evidence type="ECO:0000255" key="1"/>
<evidence type="ECO:0000256" key="2">
    <source>
        <dbReference type="SAM" id="MobiDB-lite"/>
    </source>
</evidence>
<evidence type="ECO:0000305" key="3"/>
<comment type="alternative products">
    <event type="alternative splicing"/>
    <isoform>
        <id>Q6ZSJ8-1</id>
        <name>1</name>
        <sequence type="displayed"/>
    </isoform>
    <isoform>
        <id>Q6ZSJ8-2</id>
        <name>2</name>
        <sequence type="described" ref="VSP_046648"/>
    </isoform>
</comment>
<comment type="sequence caution" evidence="3">
    <conflict type="erroneous translation">
        <sequence resource="EMBL-CDS" id="AAH57819"/>
    </conflict>
    <text>Wrong choice of CDS.</text>
</comment>
<comment type="sequence caution" evidence="3">
    <conflict type="erroneous translation">
        <sequence resource="EMBL-CDS" id="BAC86950"/>
    </conflict>
    <text>Wrong choice of CDS.</text>
</comment>
<accession>Q6ZSJ8</accession>
<accession>A2RQF4</accession>
<accession>E9PQ13</accession>
<accession>Q56A71</accession>
<protein>
    <recommendedName>
        <fullName>Uncharacterized protein C1orf122</fullName>
    </recommendedName>
    <alternativeName>
        <fullName>Protein ALAESM</fullName>
    </alternativeName>
</protein>